<reference key="1">
    <citation type="journal article" date="2002" name="Nature">
        <title>The genome sequence of Schizosaccharomyces pombe.</title>
        <authorList>
            <person name="Wood V."/>
            <person name="Gwilliam R."/>
            <person name="Rajandream M.A."/>
            <person name="Lyne M.H."/>
            <person name="Lyne R."/>
            <person name="Stewart A."/>
            <person name="Sgouros J.G."/>
            <person name="Peat N."/>
            <person name="Hayles J."/>
            <person name="Baker S.G."/>
            <person name="Basham D."/>
            <person name="Bowman S."/>
            <person name="Brooks K."/>
            <person name="Brown D."/>
            <person name="Brown S."/>
            <person name="Chillingworth T."/>
            <person name="Churcher C.M."/>
            <person name="Collins M."/>
            <person name="Connor R."/>
            <person name="Cronin A."/>
            <person name="Davis P."/>
            <person name="Feltwell T."/>
            <person name="Fraser A."/>
            <person name="Gentles S."/>
            <person name="Goble A."/>
            <person name="Hamlin N."/>
            <person name="Harris D.E."/>
            <person name="Hidalgo J."/>
            <person name="Hodgson G."/>
            <person name="Holroyd S."/>
            <person name="Hornsby T."/>
            <person name="Howarth S."/>
            <person name="Huckle E.J."/>
            <person name="Hunt S."/>
            <person name="Jagels K."/>
            <person name="James K.D."/>
            <person name="Jones L."/>
            <person name="Jones M."/>
            <person name="Leather S."/>
            <person name="McDonald S."/>
            <person name="McLean J."/>
            <person name="Mooney P."/>
            <person name="Moule S."/>
            <person name="Mungall K.L."/>
            <person name="Murphy L.D."/>
            <person name="Niblett D."/>
            <person name="Odell C."/>
            <person name="Oliver K."/>
            <person name="O'Neil S."/>
            <person name="Pearson D."/>
            <person name="Quail M.A."/>
            <person name="Rabbinowitsch E."/>
            <person name="Rutherford K.M."/>
            <person name="Rutter S."/>
            <person name="Saunders D."/>
            <person name="Seeger K."/>
            <person name="Sharp S."/>
            <person name="Skelton J."/>
            <person name="Simmonds M.N."/>
            <person name="Squares R."/>
            <person name="Squares S."/>
            <person name="Stevens K."/>
            <person name="Taylor K."/>
            <person name="Taylor R.G."/>
            <person name="Tivey A."/>
            <person name="Walsh S.V."/>
            <person name="Warren T."/>
            <person name="Whitehead S."/>
            <person name="Woodward J.R."/>
            <person name="Volckaert G."/>
            <person name="Aert R."/>
            <person name="Robben J."/>
            <person name="Grymonprez B."/>
            <person name="Weltjens I."/>
            <person name="Vanstreels E."/>
            <person name="Rieger M."/>
            <person name="Schaefer M."/>
            <person name="Mueller-Auer S."/>
            <person name="Gabel C."/>
            <person name="Fuchs M."/>
            <person name="Duesterhoeft A."/>
            <person name="Fritzc C."/>
            <person name="Holzer E."/>
            <person name="Moestl D."/>
            <person name="Hilbert H."/>
            <person name="Borzym K."/>
            <person name="Langer I."/>
            <person name="Beck A."/>
            <person name="Lehrach H."/>
            <person name="Reinhardt R."/>
            <person name="Pohl T.M."/>
            <person name="Eger P."/>
            <person name="Zimmermann W."/>
            <person name="Wedler H."/>
            <person name="Wambutt R."/>
            <person name="Purnelle B."/>
            <person name="Goffeau A."/>
            <person name="Cadieu E."/>
            <person name="Dreano S."/>
            <person name="Gloux S."/>
            <person name="Lelaure V."/>
            <person name="Mottier S."/>
            <person name="Galibert F."/>
            <person name="Aves S.J."/>
            <person name="Xiang Z."/>
            <person name="Hunt C."/>
            <person name="Moore K."/>
            <person name="Hurst S.M."/>
            <person name="Lucas M."/>
            <person name="Rochet M."/>
            <person name="Gaillardin C."/>
            <person name="Tallada V.A."/>
            <person name="Garzon A."/>
            <person name="Thode G."/>
            <person name="Daga R.R."/>
            <person name="Cruzado L."/>
            <person name="Jimenez J."/>
            <person name="Sanchez M."/>
            <person name="del Rey F."/>
            <person name="Benito J."/>
            <person name="Dominguez A."/>
            <person name="Revuelta J.L."/>
            <person name="Moreno S."/>
            <person name="Armstrong J."/>
            <person name="Forsburg S.L."/>
            <person name="Cerutti L."/>
            <person name="Lowe T."/>
            <person name="McCombie W.R."/>
            <person name="Paulsen I."/>
            <person name="Potashkin J."/>
            <person name="Shpakovski G.V."/>
            <person name="Ussery D."/>
            <person name="Barrell B.G."/>
            <person name="Nurse P."/>
        </authorList>
    </citation>
    <scope>NUCLEOTIDE SEQUENCE [LARGE SCALE GENOMIC DNA]</scope>
    <source>
        <strain>972 / ATCC 24843</strain>
    </source>
</reference>
<organism>
    <name type="scientific">Schizosaccharomyces pombe (strain 972 / ATCC 24843)</name>
    <name type="common">Fission yeast</name>
    <dbReference type="NCBI Taxonomy" id="284812"/>
    <lineage>
        <taxon>Eukaryota</taxon>
        <taxon>Fungi</taxon>
        <taxon>Dikarya</taxon>
        <taxon>Ascomycota</taxon>
        <taxon>Taphrinomycotina</taxon>
        <taxon>Schizosaccharomycetes</taxon>
        <taxon>Schizosaccharomycetales</taxon>
        <taxon>Schizosaccharomycetaceae</taxon>
        <taxon>Schizosaccharomyces</taxon>
    </lineage>
</organism>
<protein>
    <recommendedName>
        <fullName evidence="4">Putative ATPase inhibitor, mitochondrial</fullName>
    </recommendedName>
    <alternativeName>
        <fullName evidence="2">ATP synthase F1 subunit epsilon</fullName>
    </alternativeName>
</protein>
<accession>O74523</accession>
<feature type="transit peptide" description="Mitochondrion">
    <location>
        <begin position="1"/>
        <end status="unknown"/>
    </location>
</feature>
<feature type="chain" id="PRO_0000002553" description="Putative ATPase inhibitor, mitochondrial">
    <location>
        <begin status="unknown"/>
        <end position="90"/>
    </location>
</feature>
<feature type="coiled-coil region" evidence="3">
    <location>
        <begin position="42"/>
        <end position="89"/>
    </location>
</feature>
<keyword id="KW-0175">Coiled coil</keyword>
<keyword id="KW-0496">Mitochondrion</keyword>
<keyword id="KW-1185">Reference proteome</keyword>
<keyword id="KW-0809">Transit peptide</keyword>
<evidence type="ECO:0000250" key="1"/>
<evidence type="ECO:0000250" key="2">
    <source>
        <dbReference type="UniProtKB" id="Q9UII2"/>
    </source>
</evidence>
<evidence type="ECO:0000255" key="3"/>
<evidence type="ECO:0000305" key="4"/>
<comment type="function">
    <text evidence="1">Forms a one-to-one complex with ATPase to inhibit the enzyme activity completely.</text>
</comment>
<comment type="subcellular location">
    <subcellularLocation>
        <location evidence="1">Mitochondrion</location>
    </subcellularLocation>
</comment>
<comment type="similarity">
    <text evidence="4">Belongs to the ATPase inhibitor family.</text>
</comment>
<sequence>MYKYCFRKPACISYRGIRFMSKASDTDPTLANASSAKRSAFESREKAKEDFFVHQHEIEQLRKLKESLKLHREELDELESRVDKKMKSNE</sequence>
<name>ATIF_SCHPO</name>
<gene>
    <name type="primary">inh1</name>
    <name type="ORF">SPCC70.02c</name>
</gene>
<dbReference type="EMBL" id="CU329672">
    <property type="protein sequence ID" value="CAA19352.1"/>
    <property type="molecule type" value="Genomic_DNA"/>
</dbReference>
<dbReference type="PIR" id="T41548">
    <property type="entry name" value="T41548"/>
</dbReference>
<dbReference type="RefSeq" id="NP_588536.1">
    <property type="nucleotide sequence ID" value="NM_001023524.2"/>
</dbReference>
<dbReference type="SMR" id="O74523"/>
<dbReference type="BioGRID" id="276086">
    <property type="interactions" value="4"/>
</dbReference>
<dbReference type="STRING" id="284812.O74523"/>
<dbReference type="PaxDb" id="4896-SPCC70.02c.1"/>
<dbReference type="EnsemblFungi" id="SPCC70.02c.1">
    <property type="protein sequence ID" value="SPCC70.02c.1:pep"/>
    <property type="gene ID" value="SPCC70.02c"/>
</dbReference>
<dbReference type="GeneID" id="2539524"/>
<dbReference type="KEGG" id="spo:2539524"/>
<dbReference type="PomBase" id="SPCC70.02c">
    <property type="gene designation" value="inh1"/>
</dbReference>
<dbReference type="VEuPathDB" id="FungiDB:SPCC70.02c"/>
<dbReference type="HOGENOM" id="CLU_2442132_0_0_1"/>
<dbReference type="InParanoid" id="O74523"/>
<dbReference type="OMA" id="KENQFIH"/>
<dbReference type="PhylomeDB" id="O74523"/>
<dbReference type="PRO" id="PR:O74523"/>
<dbReference type="Proteomes" id="UP000002485">
    <property type="component" value="Chromosome III"/>
</dbReference>
<dbReference type="GO" id="GO:0005739">
    <property type="term" value="C:mitochondrion"/>
    <property type="evidence" value="ECO:0000266"/>
    <property type="project" value="PomBase"/>
</dbReference>
<dbReference type="GO" id="GO:0005634">
    <property type="term" value="C:nucleus"/>
    <property type="evidence" value="ECO:0007005"/>
    <property type="project" value="PomBase"/>
</dbReference>
<dbReference type="GO" id="GO:0042030">
    <property type="term" value="F:ATPase inhibitor activity"/>
    <property type="evidence" value="ECO:0000266"/>
    <property type="project" value="PomBase"/>
</dbReference>
<dbReference type="GO" id="GO:1905706">
    <property type="term" value="P:regulation of mitochondrial ATP synthesis coupled proton transport"/>
    <property type="evidence" value="ECO:0000303"/>
    <property type="project" value="PomBase"/>
</dbReference>
<dbReference type="FunFam" id="1.20.5.500:FF:000006">
    <property type="entry name" value="ATPase inhibitor, mitochondrial"/>
    <property type="match status" value="1"/>
</dbReference>
<dbReference type="Gene3D" id="1.20.5.500">
    <property type="entry name" value="Single helix bin"/>
    <property type="match status" value="1"/>
</dbReference>
<dbReference type="InterPro" id="IPR007648">
    <property type="entry name" value="ATPase_inhibitor_mt"/>
</dbReference>
<dbReference type="Pfam" id="PF04568">
    <property type="entry name" value="IATP"/>
    <property type="match status" value="1"/>
</dbReference>
<proteinExistence type="inferred from homology"/>